<reference key="1">
    <citation type="submission" date="1992-11" db="EMBL/GenBank/DDBJ databases">
        <authorList>
            <person name="Bhat K.S."/>
        </authorList>
    </citation>
    <scope>NUCLEOTIDE SEQUENCE [MRNA]</scope>
</reference>
<reference key="2">
    <citation type="submission" date="1996-05" db="EMBL/GenBank/DDBJ databases">
        <authorList>
            <person name="Kim J.M."/>
            <person name="Bae Y.S."/>
        </authorList>
    </citation>
    <scope>NUCLEOTIDE SEQUENCE [MRNA]</scope>
</reference>
<reference key="3">
    <citation type="journal article" date="2002" name="Genome Res.">
        <title>The human ribosomal protein genes: sequencing and comparative analysis of 73 genes.</title>
        <authorList>
            <person name="Yoshihama M."/>
            <person name="Uechi T."/>
            <person name="Asakawa S."/>
            <person name="Kawasaki K."/>
            <person name="Kato S."/>
            <person name="Higa S."/>
            <person name="Maeda N."/>
            <person name="Minoshima S."/>
            <person name="Tanaka T."/>
            <person name="Shimizu N."/>
            <person name="Kenmochi N."/>
        </authorList>
    </citation>
    <scope>NUCLEOTIDE SEQUENCE [GENOMIC DNA]</scope>
</reference>
<reference key="4">
    <citation type="submission" date="2004-06" db="EMBL/GenBank/DDBJ databases">
        <title>Cloning of human full open reading frames in Gateway(TM) system entry vector (pDONR201).</title>
        <authorList>
            <person name="Ebert L."/>
            <person name="Schick M."/>
            <person name="Neubert P."/>
            <person name="Schatten R."/>
            <person name="Henze S."/>
            <person name="Korn B."/>
        </authorList>
    </citation>
    <scope>NUCLEOTIDE SEQUENCE [LARGE SCALE MRNA]</scope>
</reference>
<reference key="5">
    <citation type="journal article" date="2004" name="Genome Res.">
        <title>The status, quality, and expansion of the NIH full-length cDNA project: the Mammalian Gene Collection (MGC).</title>
        <authorList>
            <consortium name="The MGC Project Team"/>
        </authorList>
    </citation>
    <scope>NUCLEOTIDE SEQUENCE [LARGE SCALE MRNA]</scope>
    <source>
        <tissue>B-cell</tissue>
        <tissue>Muscle</tissue>
        <tissue>Prostate</tissue>
    </source>
</reference>
<reference key="6">
    <citation type="journal article" date="1996" name="Eur. J. Biochem.">
        <title>Characterization of the human small-ribosomal-subunit proteins by N-terminal and internal sequencing, and mass spectrometry.</title>
        <authorList>
            <person name="Vladimirov S.N."/>
            <person name="Ivanov A.V."/>
            <person name="Karpova G.G."/>
            <person name="Musolyamov A.K."/>
            <person name="Egorov T.A."/>
            <person name="Thiede B."/>
            <person name="Wittmann-Liebold B."/>
            <person name="Otto A."/>
        </authorList>
    </citation>
    <scope>PROTEIN SEQUENCE OF 48-68</scope>
    <source>
        <tissue>Placenta</tissue>
    </source>
</reference>
<reference key="7">
    <citation type="journal article" date="1998" name="Genome Res.">
        <title>A map of 75 human ribosomal protein genes.</title>
        <authorList>
            <person name="Kenmochi N."/>
            <person name="Kawaguchi T."/>
            <person name="Rozen S."/>
            <person name="Davis E."/>
            <person name="Goodman N."/>
            <person name="Hudson T.J."/>
            <person name="Tanaka T."/>
            <person name="Page D.C."/>
        </authorList>
    </citation>
    <scope>NUCLEOTIDE SEQUENCE [GENOMIC DNA] OF 54-69</scope>
</reference>
<reference key="8">
    <citation type="journal article" date="2011" name="BMC Syst. Biol.">
        <title>Initial characterization of the human central proteome.</title>
        <authorList>
            <person name="Burkard T.R."/>
            <person name="Planyavsky M."/>
            <person name="Kaupe I."/>
            <person name="Breitwieser F.P."/>
            <person name="Buerckstuemmer T."/>
            <person name="Bennett K.L."/>
            <person name="Superti-Furga G."/>
            <person name="Colinge J."/>
        </authorList>
    </citation>
    <scope>IDENTIFICATION BY MASS SPECTROMETRY [LARGE SCALE ANALYSIS]</scope>
</reference>
<reference key="9">
    <citation type="journal article" date="2013" name="J. Proteome Res.">
        <title>Toward a comprehensive characterization of a human cancer cell phosphoproteome.</title>
        <authorList>
            <person name="Zhou H."/>
            <person name="Di Palma S."/>
            <person name="Preisinger C."/>
            <person name="Peng M."/>
            <person name="Polat A.N."/>
            <person name="Heck A.J."/>
            <person name="Mohammed S."/>
        </authorList>
    </citation>
    <scope>PHOSPHORYLATION [LARGE SCALE ANALYSIS] AT SER-41</scope>
    <scope>IDENTIFICATION BY MASS SPECTROMETRY [LARGE SCALE ANALYSIS]</scope>
    <source>
        <tissue>Erythroleukemia</tissue>
    </source>
</reference>
<reference key="10">
    <citation type="journal article" date="2014" name="Am. J. Med. Genet. A">
        <title>Diamond-Blackfan anemia with mandibulofacial dystostosis is heterogeneous, including the novel DBA genes TSR2 and RPS28.</title>
        <authorList>
            <consortium name="UW Center for Mendelian Genomics"/>
            <person name="Gripp K.W."/>
            <person name="Curry C."/>
            <person name="Olney A.H."/>
            <person name="Sandoval C."/>
            <person name="Fisher J."/>
            <person name="Chong J.X."/>
            <person name="Pilchman L."/>
            <person name="Sahraoui R."/>
            <person name="Stabley D.L."/>
            <person name="Sol-Church K."/>
        </authorList>
    </citation>
    <scope>INVOLVEMENT IN DBA15</scope>
</reference>
<reference key="11">
    <citation type="journal article" date="2014" name="Curr. Opin. Struct. Biol.">
        <title>A new system for naming ribosomal proteins.</title>
        <authorList>
            <person name="Ban N."/>
            <person name="Beckmann R."/>
            <person name="Cate J.H.D."/>
            <person name="Dinman J.D."/>
            <person name="Dragon F."/>
            <person name="Ellis S.R."/>
            <person name="Lafontaine D.L.J."/>
            <person name="Lindahl L."/>
            <person name="Liljas A."/>
            <person name="Lipton J.M."/>
            <person name="McAlear M.A."/>
            <person name="Moore P.B."/>
            <person name="Noller H.F."/>
            <person name="Ortega J."/>
            <person name="Panse V.G."/>
            <person name="Ramakrishnan V."/>
            <person name="Spahn C.M.T."/>
            <person name="Steitz T.A."/>
            <person name="Tchorzewski M."/>
            <person name="Tollervey D."/>
            <person name="Warren A.J."/>
            <person name="Williamson J.R."/>
            <person name="Wilson D."/>
            <person name="Yonath A."/>
            <person name="Yusupov M."/>
        </authorList>
    </citation>
    <scope>NOMENCLATURE</scope>
</reference>
<reference key="12">
    <citation type="journal article" date="2014" name="J. Proteomics">
        <title>An enzyme assisted RP-RPLC approach for in-depth analysis of human liver phosphoproteome.</title>
        <authorList>
            <person name="Bian Y."/>
            <person name="Song C."/>
            <person name="Cheng K."/>
            <person name="Dong M."/>
            <person name="Wang F."/>
            <person name="Huang J."/>
            <person name="Sun D."/>
            <person name="Wang L."/>
            <person name="Ye M."/>
            <person name="Zou H."/>
        </authorList>
    </citation>
    <scope>IDENTIFICATION BY MASS SPECTROMETRY [LARGE SCALE ANALYSIS]</scope>
    <source>
        <tissue>Liver</tissue>
    </source>
</reference>
<reference key="13">
    <citation type="journal article" date="2015" name="Proteomics">
        <title>N-terminome analysis of the human mitochondrial proteome.</title>
        <authorList>
            <person name="Vaca Jacome A.S."/>
            <person name="Rabilloud T."/>
            <person name="Schaeffer-Reiss C."/>
            <person name="Rompais M."/>
            <person name="Ayoub D."/>
            <person name="Lane L."/>
            <person name="Bairoch A."/>
            <person name="Van Dorsselaer A."/>
            <person name="Carapito C."/>
        </authorList>
    </citation>
    <scope>IDENTIFICATION BY MASS SPECTROMETRY [LARGE SCALE ANALYSIS]</scope>
</reference>
<reference key="14">
    <citation type="journal article" date="2013" name="Nature">
        <title>Structures of the human and Drosophila 80S ribosome.</title>
        <authorList>
            <person name="Anger A.M."/>
            <person name="Armache J.P."/>
            <person name="Berninghausen O."/>
            <person name="Habeck M."/>
            <person name="Subklewe M."/>
            <person name="Wilson D.N."/>
            <person name="Beckmann R."/>
        </authorList>
    </citation>
    <scope>STRUCTURE BY ELECTRON MICROSCOPY (5.0 ANGSTROMS)</scope>
    <scope>FUNCTION</scope>
    <scope>SUBCELLULAR LOCATION</scope>
    <scope>SUBUNIT</scope>
</reference>
<reference evidence="14" key="15">
    <citation type="journal article" date="2015" name="Cell">
        <title>Structural snapshots of actively translating human ribosomes.</title>
        <authorList>
            <person name="Behrmann E."/>
            <person name="Loerke J."/>
            <person name="Budkevich T.V."/>
            <person name="Yamamoto K."/>
            <person name="Schmidt A."/>
            <person name="Penczek P.A."/>
            <person name="Vos M.R."/>
            <person name="Burger J."/>
            <person name="Mielke T."/>
            <person name="Scheerer P."/>
            <person name="Spahn C.M."/>
        </authorList>
    </citation>
    <scope>STRUCTURE BY ELECTRON MICROSCOPY (3.50 ANGSTROMS)</scope>
    <scope>FUNCTION</scope>
    <scope>SUBCELLULAR LOCATION</scope>
    <scope>SUBUNIT</scope>
</reference>
<reference evidence="13" key="16">
    <citation type="journal article" date="2015" name="Nature">
        <title>Structure of the human 80S ribosome.</title>
        <authorList>
            <person name="Khatter H."/>
            <person name="Myasnikov A.G."/>
            <person name="Natchiar S.K."/>
            <person name="Klaholz B.P."/>
        </authorList>
    </citation>
    <scope>STRUCTURE BY ELECTRON MICROSCOPY (3.60 ANGSTROMS)</scope>
    <scope>FUNCTION</scope>
    <scope>SUBCELLULAR LOCATION</scope>
    <scope>SUBUNIT</scope>
</reference>
<reference evidence="15 16 17" key="17">
    <citation type="journal article" date="2021" name="Science">
        <title>Nucleolar maturation of the human small subunit processome.</title>
        <authorList>
            <person name="Singh S."/>
            <person name="Vanden Broeck A."/>
            <person name="Miller L."/>
            <person name="Chaker-Margot M."/>
            <person name="Klinge S."/>
        </authorList>
    </citation>
    <scope>STRUCTURE BY ELECTRON MICROSCOPY (2.70 ANGSTROMS)</scope>
    <scope>FUNCTION</scope>
    <scope>SUBUNIT</scope>
    <scope>SUBCELLULAR LOCATION</scope>
</reference>
<feature type="chain" id="PRO_0000136822" description="Small ribosomal subunit protein eS28">
    <location>
        <begin position="1"/>
        <end position="69"/>
    </location>
</feature>
<feature type="modified residue" description="N-acetylmethionine" evidence="1">
    <location>
        <position position="1"/>
    </location>
</feature>
<feature type="modified residue" description="Phosphoserine" evidence="18">
    <location>
        <position position="41"/>
    </location>
</feature>
<feature type="sequence conflict" description="In Ref. 6; AA sequence." evidence="9" ref="6">
    <original>R</original>
    <variation>P</variation>
    <location>
        <position position="66"/>
    </location>
</feature>
<feature type="strand" evidence="20">
    <location>
        <begin position="10"/>
        <end position="22"/>
    </location>
</feature>
<feature type="strand" evidence="19">
    <location>
        <begin position="23"/>
        <end position="25"/>
    </location>
</feature>
<feature type="strand" evidence="20">
    <location>
        <begin position="27"/>
        <end position="37"/>
    </location>
</feature>
<feature type="strand" evidence="20">
    <location>
        <begin position="41"/>
        <end position="49"/>
    </location>
</feature>
<feature type="strand" evidence="20">
    <location>
        <begin position="55"/>
        <end position="60"/>
    </location>
</feature>
<evidence type="ECO:0000250" key="1">
    <source>
        <dbReference type="UniProtKB" id="P62859"/>
    </source>
</evidence>
<evidence type="ECO:0000250" key="2">
    <source>
        <dbReference type="UniProtKB" id="Q6QAT1"/>
    </source>
</evidence>
<evidence type="ECO:0000269" key="3">
    <source>
    </source>
</evidence>
<evidence type="ECO:0000269" key="4">
    <source>
    </source>
</evidence>
<evidence type="ECO:0000269" key="5">
    <source>
    </source>
</evidence>
<evidence type="ECO:0000269" key="6">
    <source>
    </source>
</evidence>
<evidence type="ECO:0000269" key="7">
    <source>
    </source>
</evidence>
<evidence type="ECO:0000303" key="8">
    <source>
    </source>
</evidence>
<evidence type="ECO:0000305" key="9"/>
<evidence type="ECO:0000305" key="10">
    <source>
    </source>
</evidence>
<evidence type="ECO:0000305" key="11">
    <source>
    </source>
</evidence>
<evidence type="ECO:0000312" key="12">
    <source>
        <dbReference type="HGNC" id="HGNC:10418"/>
    </source>
</evidence>
<evidence type="ECO:0007744" key="13">
    <source>
        <dbReference type="PDB" id="4UG0"/>
    </source>
</evidence>
<evidence type="ECO:0007744" key="14">
    <source>
        <dbReference type="PDB" id="5AJ0"/>
    </source>
</evidence>
<evidence type="ECO:0007744" key="15">
    <source>
        <dbReference type="PDB" id="7MQ8"/>
    </source>
</evidence>
<evidence type="ECO:0007744" key="16">
    <source>
        <dbReference type="PDB" id="7MQ9"/>
    </source>
</evidence>
<evidence type="ECO:0007744" key="17">
    <source>
        <dbReference type="PDB" id="7MQA"/>
    </source>
</evidence>
<evidence type="ECO:0007744" key="18">
    <source>
    </source>
</evidence>
<evidence type="ECO:0007829" key="19">
    <source>
        <dbReference type="PDB" id="6ZXE"/>
    </source>
</evidence>
<evidence type="ECO:0007829" key="20">
    <source>
        <dbReference type="PDB" id="7R4X"/>
    </source>
</evidence>
<name>RS28_HUMAN</name>
<organism>
    <name type="scientific">Homo sapiens</name>
    <name type="common">Human</name>
    <dbReference type="NCBI Taxonomy" id="9606"/>
    <lineage>
        <taxon>Eukaryota</taxon>
        <taxon>Metazoa</taxon>
        <taxon>Chordata</taxon>
        <taxon>Craniata</taxon>
        <taxon>Vertebrata</taxon>
        <taxon>Euteleostomi</taxon>
        <taxon>Mammalia</taxon>
        <taxon>Eutheria</taxon>
        <taxon>Euarchontoglires</taxon>
        <taxon>Primates</taxon>
        <taxon>Haplorrhini</taxon>
        <taxon>Catarrhini</taxon>
        <taxon>Hominidae</taxon>
        <taxon>Homo</taxon>
    </lineage>
</organism>
<protein>
    <recommendedName>
        <fullName evidence="8">Small ribosomal subunit protein eS28</fullName>
    </recommendedName>
    <alternativeName>
        <fullName>40S ribosomal protein S28</fullName>
    </alternativeName>
</protein>
<keyword id="KW-0002">3D-structure</keyword>
<keyword id="KW-0007">Acetylation</keyword>
<keyword id="KW-0963">Cytoplasm</keyword>
<keyword id="KW-1024">Diamond-Blackfan anemia</keyword>
<keyword id="KW-0903">Direct protein sequencing</keyword>
<keyword id="KW-0256">Endoplasmic reticulum</keyword>
<keyword id="KW-0539">Nucleus</keyword>
<keyword id="KW-0597">Phosphoprotein</keyword>
<keyword id="KW-1267">Proteomics identification</keyword>
<keyword id="KW-1185">Reference proteome</keyword>
<keyword id="KW-0687">Ribonucleoprotein</keyword>
<keyword id="KW-0689">Ribosomal protein</keyword>
<sequence>MDTSRVQPIKLARVTKVLGRTGSQGQCTQVRVEFMDDTSRSIIRNVKGPVREGDVLTLLESEREARRLR</sequence>
<comment type="function">
    <text evidence="3 5 6 7">Component of the small ribosomal subunit (PubMed:23636399, PubMed:25901680, PubMed:25957688). The ribosome is a large ribonucleoprotein complex responsible for the synthesis of proteins in the cell (PubMed:23636399, PubMed:25901680, PubMed:25957688). Part of the small subunit (SSU) processome, first precursor of the small eukaryotic ribosomal subunit. During the assembly of the SSU processome in the nucleolus, many ribosome biogenesis factors, an RNA chaperone and ribosomal proteins associate with the nascent pre-rRNA and work in concert to generate RNA folding, modifications, rearrangements and cleavage as well as targeted degradation of pre-ribosomal RNA by the RNA exosome (PubMed:34516797).</text>
</comment>
<comment type="subunit">
    <text evidence="3 5 6 7">Component of the 40S small ribosomal subunit (PubMed:23636399, PubMed:25901680, PubMed:25957688). Part of the small subunit (SSU) processome, composed of more than 70 proteins and the RNA chaperone small nucleolar RNA (snoRNA) U3 (PubMed:34516797).</text>
</comment>
<comment type="interaction">
    <interactant intactId="EBI-353027">
        <id>P62857</id>
    </interactant>
    <interactant intactId="EBI-748961">
        <id>O95273</id>
        <label>CCNDBP1</label>
    </interactant>
    <organismsDiffer>false</organismsDiffer>
    <experiments>3</experiments>
</comment>
<comment type="interaction">
    <interactant intactId="EBI-353027">
        <id>P62857</id>
    </interactant>
    <interactant intactId="EBI-7116203">
        <id>O75031</id>
        <label>HSF2BP</label>
    </interactant>
    <organismsDiffer>false</organismsDiffer>
    <experiments>3</experiments>
</comment>
<comment type="interaction">
    <interactant intactId="EBI-353027">
        <id>P62857</id>
    </interactant>
    <interactant intactId="EBI-11959885">
        <id>Q07627</id>
        <label>KRTAP1-1</label>
    </interactant>
    <organismsDiffer>false</organismsDiffer>
    <experiments>3</experiments>
</comment>
<comment type="interaction">
    <interactant intactId="EBI-353027">
        <id>P62857</id>
    </interactant>
    <interactant intactId="EBI-10172290">
        <id>P60409</id>
        <label>KRTAP10-7</label>
    </interactant>
    <organismsDiffer>false</organismsDiffer>
    <experiments>3</experiments>
</comment>
<comment type="interaction">
    <interactant intactId="EBI-353027">
        <id>P62857</id>
    </interactant>
    <interactant intactId="EBI-10171774">
        <id>P60410</id>
        <label>KRTAP10-8</label>
    </interactant>
    <organismsDiffer>false</organismsDiffer>
    <experiments>3</experiments>
</comment>
<comment type="interaction">
    <interactant intactId="EBI-353027">
        <id>P62857</id>
    </interactant>
    <interactant intactId="EBI-10196781">
        <id>P0C7H8</id>
        <label>KRTAP2-3</label>
    </interactant>
    <organismsDiffer>false</organismsDiffer>
    <experiments>3</experiments>
</comment>
<comment type="interaction">
    <interactant intactId="EBI-353027">
        <id>P62857</id>
    </interactant>
    <interactant intactId="EBI-945833">
        <id>Q7Z3S9</id>
        <label>NOTCH2NLA</label>
    </interactant>
    <organismsDiffer>false</organismsDiffer>
    <experiments>3</experiments>
</comment>
<comment type="subcellular location">
    <subcellularLocation>
        <location evidence="6">Cytoplasm</location>
        <location evidence="6">Cytosol</location>
    </subcellularLocation>
    <subcellularLocation>
        <location evidence="10 11">Cytoplasm</location>
    </subcellularLocation>
    <subcellularLocation>
        <location evidence="2">Rough endoplasmic reticulum</location>
    </subcellularLocation>
    <subcellularLocation>
        <location evidence="7">Nucleus</location>
        <location evidence="7">Nucleolus</location>
    </subcellularLocation>
    <text evidence="2 6">Detected on cytosolic polysomes (PubMed:25957688). Detected in ribosomes that are associated with the rough endoplasmic reticulum (By similarity).</text>
</comment>
<comment type="disease" evidence="4">
    <disease id="DI-04370">
        <name>Diamond-Blackfan anemia 15, with mandibulofacial dysostosis</name>
        <acronym>DBA15</acronym>
        <description>A form of Diamond-Blackfan anemia, a congenital non-regenerative hypoplastic anemia that usually presents early in infancy. Diamond-Blackfan anemia is characterized by a moderate to severe macrocytic anemia, erythroblastopenia, and an increased risk of malignancy. 30 to 40% of Diamond-Blackfan anemia patients present with short stature and congenital anomalies, the most frequent being craniofacial (Pierre-Robin syndrome and cleft palate), thumb and urogenital anomalies.</description>
        <dbReference type="MIM" id="606164"/>
    </disease>
    <text>The disease is caused by variants affecting the gene represented in this entry.</text>
</comment>
<comment type="similarity">
    <text evidence="9">Belongs to the eukaryotic ribosomal protein eS28 family.</text>
</comment>
<dbReference type="EMBL" id="L05091">
    <property type="protein sequence ID" value="AAC15855.1"/>
    <property type="molecule type" value="mRNA"/>
</dbReference>
<dbReference type="EMBL" id="U58682">
    <property type="protein sequence ID" value="AAB07066.1"/>
    <property type="molecule type" value="mRNA"/>
</dbReference>
<dbReference type="EMBL" id="AB061846">
    <property type="protein sequence ID" value="BAB79484.1"/>
    <property type="molecule type" value="Genomic_DNA"/>
</dbReference>
<dbReference type="EMBL" id="CR457055">
    <property type="protein sequence ID" value="CAG33336.1"/>
    <property type="molecule type" value="mRNA"/>
</dbReference>
<dbReference type="EMBL" id="BC000354">
    <property type="protein sequence ID" value="AAH00354.1"/>
    <property type="molecule type" value="mRNA"/>
</dbReference>
<dbReference type="EMBL" id="BC021239">
    <property type="protein sequence ID" value="AAH21239.1"/>
    <property type="molecule type" value="mRNA"/>
</dbReference>
<dbReference type="EMBL" id="BC070217">
    <property type="protein sequence ID" value="AAH70217.1"/>
    <property type="molecule type" value="mRNA"/>
</dbReference>
<dbReference type="EMBL" id="BC070218">
    <property type="protein sequence ID" value="AAH70218.1"/>
    <property type="molecule type" value="mRNA"/>
</dbReference>
<dbReference type="EMBL" id="AB007164">
    <property type="protein sequence ID" value="BAA28594.1"/>
    <property type="molecule type" value="Genomic_DNA"/>
</dbReference>
<dbReference type="CCDS" id="CCDS45953.1"/>
<dbReference type="PIR" id="S68914">
    <property type="entry name" value="S68914"/>
</dbReference>
<dbReference type="RefSeq" id="NP_001022.1">
    <property type="nucleotide sequence ID" value="NM_001031.5"/>
</dbReference>
<dbReference type="RefSeq" id="XP_047295157.1">
    <property type="nucleotide sequence ID" value="XM_047439201.1"/>
</dbReference>
<dbReference type="RefSeq" id="XP_054177678.1">
    <property type="nucleotide sequence ID" value="XM_054321703.1"/>
</dbReference>
<dbReference type="PDB" id="4UG0">
    <property type="method" value="EM"/>
    <property type="chains" value="Sc=1-69"/>
</dbReference>
<dbReference type="PDB" id="4V6X">
    <property type="method" value="EM"/>
    <property type="resolution" value="5.00 A"/>
    <property type="chains" value="Ac=1-69"/>
</dbReference>
<dbReference type="PDB" id="5A2Q">
    <property type="method" value="EM"/>
    <property type="resolution" value="3.90 A"/>
    <property type="chains" value="c=8-68"/>
</dbReference>
<dbReference type="PDB" id="5AJ0">
    <property type="method" value="EM"/>
    <property type="resolution" value="3.50 A"/>
    <property type="chains" value="Bc=1-69"/>
</dbReference>
<dbReference type="PDB" id="5FLX">
    <property type="method" value="EM"/>
    <property type="resolution" value="3.90 A"/>
    <property type="chains" value="c=1-69"/>
</dbReference>
<dbReference type="PDB" id="5LKS">
    <property type="method" value="EM"/>
    <property type="resolution" value="3.60 A"/>
    <property type="chains" value="Sc=1-69"/>
</dbReference>
<dbReference type="PDB" id="5OA3">
    <property type="method" value="EM"/>
    <property type="resolution" value="4.30 A"/>
    <property type="chains" value="c=8-68"/>
</dbReference>
<dbReference type="PDB" id="5T2C">
    <property type="method" value="EM"/>
    <property type="resolution" value="3.60 A"/>
    <property type="chains" value="AF=1-69"/>
</dbReference>
<dbReference type="PDB" id="5VYC">
    <property type="method" value="X-ray"/>
    <property type="resolution" value="6.00 A"/>
    <property type="chains" value="c1/c2/c3/c4/c5/c6=1-69"/>
</dbReference>
<dbReference type="PDB" id="6FEC">
    <property type="method" value="EM"/>
    <property type="resolution" value="6.30 A"/>
    <property type="chains" value="l=5-68"/>
</dbReference>
<dbReference type="PDB" id="6G18">
    <property type="method" value="EM"/>
    <property type="resolution" value="3.60 A"/>
    <property type="chains" value="c=1-69"/>
</dbReference>
<dbReference type="PDB" id="6G4S">
    <property type="method" value="EM"/>
    <property type="resolution" value="4.00 A"/>
    <property type="chains" value="c=1-69"/>
</dbReference>
<dbReference type="PDB" id="6G4W">
    <property type="method" value="EM"/>
    <property type="resolution" value="4.50 A"/>
    <property type="chains" value="c=1-69"/>
</dbReference>
<dbReference type="PDB" id="6G51">
    <property type="method" value="EM"/>
    <property type="resolution" value="4.10 A"/>
    <property type="chains" value="c=1-69"/>
</dbReference>
<dbReference type="PDB" id="6G53">
    <property type="method" value="EM"/>
    <property type="resolution" value="4.50 A"/>
    <property type="chains" value="c=1-69"/>
</dbReference>
<dbReference type="PDB" id="6G5H">
    <property type="method" value="EM"/>
    <property type="resolution" value="3.60 A"/>
    <property type="chains" value="c=1-69"/>
</dbReference>
<dbReference type="PDB" id="6G5I">
    <property type="method" value="EM"/>
    <property type="resolution" value="3.50 A"/>
    <property type="chains" value="c=1-69"/>
</dbReference>
<dbReference type="PDB" id="6IP5">
    <property type="method" value="EM"/>
    <property type="resolution" value="3.90 A"/>
    <property type="chains" value="3D=1-69"/>
</dbReference>
<dbReference type="PDB" id="6IP6">
    <property type="method" value="EM"/>
    <property type="resolution" value="4.50 A"/>
    <property type="chains" value="3D=1-69"/>
</dbReference>
<dbReference type="PDB" id="6IP8">
    <property type="method" value="EM"/>
    <property type="resolution" value="3.90 A"/>
    <property type="chains" value="3D=1-69"/>
</dbReference>
<dbReference type="PDB" id="6OLE">
    <property type="method" value="EM"/>
    <property type="resolution" value="3.10 A"/>
    <property type="chains" value="Sc=5-68"/>
</dbReference>
<dbReference type="PDB" id="6OLF">
    <property type="method" value="EM"/>
    <property type="resolution" value="3.90 A"/>
    <property type="chains" value="Sc=5-68"/>
</dbReference>
<dbReference type="PDB" id="6OLG">
    <property type="method" value="EM"/>
    <property type="resolution" value="3.40 A"/>
    <property type="chains" value="Bc=7-68"/>
</dbReference>
<dbReference type="PDB" id="6OLI">
    <property type="method" value="EM"/>
    <property type="resolution" value="3.50 A"/>
    <property type="chains" value="Sc=5-68"/>
</dbReference>
<dbReference type="PDB" id="6OLZ">
    <property type="method" value="EM"/>
    <property type="resolution" value="3.90 A"/>
    <property type="chains" value="Bc=7-68"/>
</dbReference>
<dbReference type="PDB" id="6OM0">
    <property type="method" value="EM"/>
    <property type="resolution" value="3.10 A"/>
    <property type="chains" value="Sc=5-68"/>
</dbReference>
<dbReference type="PDB" id="6OM7">
    <property type="method" value="EM"/>
    <property type="resolution" value="3.70 A"/>
    <property type="chains" value="Sc=5-68"/>
</dbReference>
<dbReference type="PDB" id="6QZP">
    <property type="method" value="EM"/>
    <property type="resolution" value="2.90 A"/>
    <property type="chains" value="Sc=5-68"/>
</dbReference>
<dbReference type="PDB" id="6XA1">
    <property type="method" value="EM"/>
    <property type="resolution" value="2.80 A"/>
    <property type="chains" value="Sc=8-68"/>
</dbReference>
<dbReference type="PDB" id="6Y0G">
    <property type="method" value="EM"/>
    <property type="resolution" value="3.20 A"/>
    <property type="chains" value="Sc=1-69"/>
</dbReference>
<dbReference type="PDB" id="6Y2L">
    <property type="method" value="EM"/>
    <property type="resolution" value="3.00 A"/>
    <property type="chains" value="Sc=1-69"/>
</dbReference>
<dbReference type="PDB" id="6Y57">
    <property type="method" value="EM"/>
    <property type="resolution" value="3.50 A"/>
    <property type="chains" value="Sc=1-69"/>
</dbReference>
<dbReference type="PDB" id="6YBS">
    <property type="method" value="EM"/>
    <property type="resolution" value="3.10 A"/>
    <property type="chains" value="n=1-69"/>
</dbReference>
<dbReference type="PDB" id="6Z6L">
    <property type="method" value="EM"/>
    <property type="resolution" value="3.00 A"/>
    <property type="chains" value="Sc=1-69"/>
</dbReference>
<dbReference type="PDB" id="6Z6M">
    <property type="method" value="EM"/>
    <property type="resolution" value="3.10 A"/>
    <property type="chains" value="Sc=1-69"/>
</dbReference>
<dbReference type="PDB" id="6Z6N">
    <property type="method" value="EM"/>
    <property type="resolution" value="2.90 A"/>
    <property type="chains" value="Sc=1-69"/>
</dbReference>
<dbReference type="PDB" id="6ZLW">
    <property type="method" value="EM"/>
    <property type="resolution" value="2.60 A"/>
    <property type="chains" value="d=1-69"/>
</dbReference>
<dbReference type="PDB" id="6ZM7">
    <property type="method" value="EM"/>
    <property type="resolution" value="2.70 A"/>
    <property type="chains" value="Sc=1-69"/>
</dbReference>
<dbReference type="PDB" id="6ZME">
    <property type="method" value="EM"/>
    <property type="resolution" value="3.00 A"/>
    <property type="chains" value="Sc=1-69"/>
</dbReference>
<dbReference type="PDB" id="6ZMI">
    <property type="method" value="EM"/>
    <property type="resolution" value="2.60 A"/>
    <property type="chains" value="Sc=1-69"/>
</dbReference>
<dbReference type="PDB" id="6ZMO">
    <property type="method" value="EM"/>
    <property type="resolution" value="3.10 A"/>
    <property type="chains" value="Sc=1-69"/>
</dbReference>
<dbReference type="PDB" id="6ZMT">
    <property type="method" value="EM"/>
    <property type="resolution" value="3.00 A"/>
    <property type="chains" value="d=1-69"/>
</dbReference>
<dbReference type="PDB" id="6ZMW">
    <property type="method" value="EM"/>
    <property type="resolution" value="3.70 A"/>
    <property type="chains" value="n=1-69"/>
</dbReference>
<dbReference type="PDB" id="6ZN5">
    <property type="method" value="EM"/>
    <property type="resolution" value="3.20 A"/>
    <property type="chains" value="d=8-68"/>
</dbReference>
<dbReference type="PDB" id="6ZOJ">
    <property type="method" value="EM"/>
    <property type="resolution" value="2.80 A"/>
    <property type="chains" value="c=8-68"/>
</dbReference>
<dbReference type="PDB" id="6ZOL">
    <property type="method" value="EM"/>
    <property type="resolution" value="2.80 A"/>
    <property type="chains" value="c=8-68"/>
</dbReference>
<dbReference type="PDB" id="6ZON">
    <property type="method" value="EM"/>
    <property type="resolution" value="3.00 A"/>
    <property type="chains" value="S=1-69"/>
</dbReference>
<dbReference type="PDB" id="6ZP4">
    <property type="method" value="EM"/>
    <property type="resolution" value="2.90 A"/>
    <property type="chains" value="S=1-69"/>
</dbReference>
<dbReference type="PDB" id="6ZUO">
    <property type="method" value="EM"/>
    <property type="resolution" value="3.10 A"/>
    <property type="chains" value="c=1-69"/>
</dbReference>
<dbReference type="PDB" id="6ZV6">
    <property type="method" value="EM"/>
    <property type="resolution" value="2.90 A"/>
    <property type="chains" value="c=1-69"/>
</dbReference>
<dbReference type="PDB" id="6ZVH">
    <property type="method" value="EM"/>
    <property type="resolution" value="2.90 A"/>
    <property type="chains" value="c=5-68"/>
</dbReference>
<dbReference type="PDB" id="6ZVJ">
    <property type="method" value="EM"/>
    <property type="resolution" value="3.80 A"/>
    <property type="chains" value="S=8-68"/>
</dbReference>
<dbReference type="PDB" id="6ZXD">
    <property type="method" value="EM"/>
    <property type="resolution" value="3.20 A"/>
    <property type="chains" value="c=1-69"/>
</dbReference>
<dbReference type="PDB" id="6ZXE">
    <property type="method" value="EM"/>
    <property type="resolution" value="3.00 A"/>
    <property type="chains" value="c=1-69"/>
</dbReference>
<dbReference type="PDB" id="6ZXF">
    <property type="method" value="EM"/>
    <property type="resolution" value="3.70 A"/>
    <property type="chains" value="c=1-69"/>
</dbReference>
<dbReference type="PDB" id="6ZXG">
    <property type="method" value="EM"/>
    <property type="resolution" value="2.60 A"/>
    <property type="chains" value="c=1-69"/>
</dbReference>
<dbReference type="PDB" id="6ZXH">
    <property type="method" value="EM"/>
    <property type="resolution" value="2.70 A"/>
    <property type="chains" value="c=1-69"/>
</dbReference>
<dbReference type="PDB" id="7A09">
    <property type="method" value="EM"/>
    <property type="resolution" value="3.50 A"/>
    <property type="chains" value="S=1-69"/>
</dbReference>
<dbReference type="PDB" id="7K5I">
    <property type="method" value="EM"/>
    <property type="resolution" value="2.90 A"/>
    <property type="chains" value="c=1-69"/>
</dbReference>
<dbReference type="PDB" id="7MQ8">
    <property type="method" value="EM"/>
    <property type="resolution" value="3.60 A"/>
    <property type="chains" value="LG=1-69"/>
</dbReference>
<dbReference type="PDB" id="7MQ9">
    <property type="method" value="EM"/>
    <property type="resolution" value="3.87 A"/>
    <property type="chains" value="LG=1-69"/>
</dbReference>
<dbReference type="PDB" id="7MQA">
    <property type="method" value="EM"/>
    <property type="resolution" value="2.70 A"/>
    <property type="chains" value="LG=1-69"/>
</dbReference>
<dbReference type="PDB" id="7QP6">
    <property type="method" value="EM"/>
    <property type="resolution" value="4.70 A"/>
    <property type="chains" value="n=1-69"/>
</dbReference>
<dbReference type="PDB" id="7QP7">
    <property type="method" value="EM"/>
    <property type="resolution" value="3.70 A"/>
    <property type="chains" value="n=1-69"/>
</dbReference>
<dbReference type="PDB" id="7R4X">
    <property type="method" value="EM"/>
    <property type="resolution" value="2.15 A"/>
    <property type="chains" value="c=1-69"/>
</dbReference>
<dbReference type="PDB" id="7TQL">
    <property type="method" value="EM"/>
    <property type="resolution" value="3.40 A"/>
    <property type="chains" value="d=8-65"/>
</dbReference>
<dbReference type="PDB" id="7WTT">
    <property type="method" value="EM"/>
    <property type="resolution" value="3.10 A"/>
    <property type="chains" value="c=1-69"/>
</dbReference>
<dbReference type="PDB" id="7WTU">
    <property type="method" value="EM"/>
    <property type="resolution" value="3.00 A"/>
    <property type="chains" value="c=1-69"/>
</dbReference>
<dbReference type="PDB" id="7WTV">
    <property type="method" value="EM"/>
    <property type="resolution" value="3.50 A"/>
    <property type="chains" value="c=1-69"/>
</dbReference>
<dbReference type="PDB" id="7WTW">
    <property type="method" value="EM"/>
    <property type="resolution" value="3.20 A"/>
    <property type="chains" value="c=1-69"/>
</dbReference>
<dbReference type="PDB" id="7WTX">
    <property type="method" value="EM"/>
    <property type="resolution" value="3.10 A"/>
    <property type="chains" value="c=1-69"/>
</dbReference>
<dbReference type="PDB" id="7WTZ">
    <property type="method" value="EM"/>
    <property type="resolution" value="3.00 A"/>
    <property type="chains" value="c=1-69"/>
</dbReference>
<dbReference type="PDB" id="7WU0">
    <property type="method" value="EM"/>
    <property type="resolution" value="3.30 A"/>
    <property type="chains" value="c=1-69"/>
</dbReference>
<dbReference type="PDB" id="7XNX">
    <property type="method" value="EM"/>
    <property type="resolution" value="2.70 A"/>
    <property type="chains" value="Sc=1-69"/>
</dbReference>
<dbReference type="PDB" id="7XNY">
    <property type="method" value="EM"/>
    <property type="resolution" value="2.50 A"/>
    <property type="chains" value="Sc=1-69"/>
</dbReference>
<dbReference type="PDB" id="8G5Y">
    <property type="method" value="EM"/>
    <property type="resolution" value="2.29 A"/>
    <property type="chains" value="Sc=1-69"/>
</dbReference>
<dbReference type="PDB" id="8G5Z">
    <property type="method" value="EM"/>
    <property type="resolution" value="2.64 A"/>
    <property type="chains" value="Sc=5-68"/>
</dbReference>
<dbReference type="PDB" id="8G60">
    <property type="method" value="EM"/>
    <property type="resolution" value="2.54 A"/>
    <property type="chains" value="Sc=1-69"/>
</dbReference>
<dbReference type="PDB" id="8G61">
    <property type="method" value="EM"/>
    <property type="resolution" value="2.94 A"/>
    <property type="chains" value="Sc=1-69"/>
</dbReference>
<dbReference type="PDB" id="8G6J">
    <property type="method" value="EM"/>
    <property type="resolution" value="2.80 A"/>
    <property type="chains" value="Sc=1-69"/>
</dbReference>
<dbReference type="PDB" id="8GLP">
    <property type="method" value="EM"/>
    <property type="resolution" value="1.67 A"/>
    <property type="chains" value="Sc=1-69"/>
</dbReference>
<dbReference type="PDB" id="8IFD">
    <property type="method" value="EM"/>
    <property type="resolution" value="2.59 A"/>
    <property type="chains" value="3D=1-69"/>
</dbReference>
<dbReference type="PDB" id="8IFE">
    <property type="method" value="EM"/>
    <property type="resolution" value="2.57 A"/>
    <property type="chains" value="3D=1-69"/>
</dbReference>
<dbReference type="PDB" id="8JDJ">
    <property type="method" value="EM"/>
    <property type="resolution" value="2.50 A"/>
    <property type="chains" value="AO=1-69"/>
</dbReference>
<dbReference type="PDB" id="8JDK">
    <property type="method" value="EM"/>
    <property type="resolution" value="2.26 A"/>
    <property type="chains" value="AO=1-69"/>
</dbReference>
<dbReference type="PDB" id="8JDL">
    <property type="method" value="EM"/>
    <property type="resolution" value="2.42 A"/>
    <property type="chains" value="AO=1-69"/>
</dbReference>
<dbReference type="PDB" id="8JDM">
    <property type="method" value="EM"/>
    <property type="resolution" value="2.67 A"/>
    <property type="chains" value="AO=1-69"/>
</dbReference>
<dbReference type="PDB" id="8K2C">
    <property type="method" value="EM"/>
    <property type="resolution" value="2.40 A"/>
    <property type="chains" value="Sc=1-69"/>
</dbReference>
<dbReference type="PDB" id="8OZ0">
    <property type="method" value="EM"/>
    <property type="resolution" value="3.50 A"/>
    <property type="chains" value="s=1-69"/>
</dbReference>
<dbReference type="PDB" id="8PJ1">
    <property type="method" value="EM"/>
    <property type="resolution" value="3.40 A"/>
    <property type="chains" value="n=1-69"/>
</dbReference>
<dbReference type="PDB" id="8PJ2">
    <property type="method" value="EM"/>
    <property type="resolution" value="3.40 A"/>
    <property type="chains" value="n=1-69"/>
</dbReference>
<dbReference type="PDB" id="8PJ3">
    <property type="method" value="EM"/>
    <property type="resolution" value="3.70 A"/>
    <property type="chains" value="n=1-69"/>
</dbReference>
<dbReference type="PDB" id="8PJ4">
    <property type="method" value="EM"/>
    <property type="resolution" value="3.20 A"/>
    <property type="chains" value="n=1-69"/>
</dbReference>
<dbReference type="PDB" id="8PJ5">
    <property type="method" value="EM"/>
    <property type="resolution" value="2.90 A"/>
    <property type="chains" value="n=1-69"/>
</dbReference>
<dbReference type="PDB" id="8PJ6">
    <property type="method" value="EM"/>
    <property type="resolution" value="2.90 A"/>
    <property type="chains" value="n=1-69"/>
</dbReference>
<dbReference type="PDB" id="8PPK">
    <property type="method" value="EM"/>
    <property type="resolution" value="2.98 A"/>
    <property type="chains" value="c=1-69"/>
</dbReference>
<dbReference type="PDB" id="8PPL">
    <property type="method" value="EM"/>
    <property type="resolution" value="2.65 A"/>
    <property type="chains" value="Ac=1-69"/>
</dbReference>
<dbReference type="PDB" id="8QOI">
    <property type="method" value="EM"/>
    <property type="resolution" value="1.90 A"/>
    <property type="chains" value="Sc=1-69"/>
</dbReference>
<dbReference type="PDB" id="8RG0">
    <property type="method" value="EM"/>
    <property type="resolution" value="3.40 A"/>
    <property type="chains" value="n=1-69"/>
</dbReference>
<dbReference type="PDB" id="8T4S">
    <property type="method" value="EM"/>
    <property type="resolution" value="2.60 A"/>
    <property type="chains" value="c=1-69"/>
</dbReference>
<dbReference type="PDB" id="8UKB">
    <property type="method" value="EM"/>
    <property type="resolution" value="3.05 A"/>
    <property type="chains" value="Sc=5-68"/>
</dbReference>
<dbReference type="PDB" id="8XP2">
    <property type="method" value="EM"/>
    <property type="resolution" value="3.20 A"/>
    <property type="chains" value="Sc=1-69"/>
</dbReference>
<dbReference type="PDB" id="8XP3">
    <property type="method" value="EM"/>
    <property type="resolution" value="3.40 A"/>
    <property type="chains" value="Sc=1-69"/>
</dbReference>
<dbReference type="PDB" id="8XSX">
    <property type="method" value="EM"/>
    <property type="resolution" value="2.40 A"/>
    <property type="chains" value="Sc=1-69"/>
</dbReference>
<dbReference type="PDB" id="8XSY">
    <property type="method" value="EM"/>
    <property type="resolution" value="3.00 A"/>
    <property type="chains" value="Sc=1-69"/>
</dbReference>
<dbReference type="PDB" id="8XSZ">
    <property type="method" value="EM"/>
    <property type="resolution" value="3.20 A"/>
    <property type="chains" value="Sc=1-69"/>
</dbReference>
<dbReference type="PDB" id="8XXL">
    <property type="method" value="EM"/>
    <property type="resolution" value="2.90 A"/>
    <property type="chains" value="Sc=1-69"/>
</dbReference>
<dbReference type="PDB" id="8XXM">
    <property type="method" value="EM"/>
    <property type="resolution" value="3.20 A"/>
    <property type="chains" value="Sc=1-69"/>
</dbReference>
<dbReference type="PDB" id="8XXN">
    <property type="method" value="EM"/>
    <property type="resolution" value="3.60 A"/>
    <property type="chains" value="Sc=1-69"/>
</dbReference>
<dbReference type="PDB" id="8Y0W">
    <property type="method" value="EM"/>
    <property type="resolution" value="3.40 A"/>
    <property type="chains" value="Sc=1-69"/>
</dbReference>
<dbReference type="PDB" id="8Y0X">
    <property type="method" value="EM"/>
    <property type="resolution" value="3.30 A"/>
    <property type="chains" value="Sc=1-69"/>
</dbReference>
<dbReference type="PDB" id="8YOO">
    <property type="method" value="EM"/>
    <property type="resolution" value="2.00 A"/>
    <property type="chains" value="Sc=1-69"/>
</dbReference>
<dbReference type="PDB" id="8YOP">
    <property type="method" value="EM"/>
    <property type="resolution" value="2.20 A"/>
    <property type="chains" value="Sc=1-69"/>
</dbReference>
<dbReference type="PDB" id="8ZDB">
    <property type="method" value="EM"/>
    <property type="resolution" value="3.60 A"/>
    <property type="chains" value="c=1-69"/>
</dbReference>
<dbReference type="PDB" id="8ZDC">
    <property type="method" value="EM"/>
    <property type="resolution" value="3.80 A"/>
    <property type="chains" value="c=1-69"/>
</dbReference>
<dbReference type="PDB" id="8ZDD">
    <property type="method" value="EM"/>
    <property type="resolution" value="3.70 A"/>
    <property type="chains" value="c=1-69"/>
</dbReference>
<dbReference type="PDB" id="9BKD">
    <property type="method" value="EM"/>
    <property type="resolution" value="2.60 A"/>
    <property type="chains" value="n=1-69"/>
</dbReference>
<dbReference type="PDB" id="9BLN">
    <property type="method" value="EM"/>
    <property type="resolution" value="3.90 A"/>
    <property type="chains" value="n=1-69"/>
</dbReference>
<dbReference type="PDB" id="9C3H">
    <property type="method" value="EM"/>
    <property type="resolution" value="2.00 A"/>
    <property type="chains" value="Sd=1-69"/>
</dbReference>
<dbReference type="PDB" id="9G8M">
    <property type="method" value="EM"/>
    <property type="resolution" value="3.30 A"/>
    <property type="chains" value="Sc=1-69"/>
</dbReference>
<dbReference type="PDB" id="9G8O">
    <property type="method" value="EM"/>
    <property type="resolution" value="3.40 A"/>
    <property type="chains" value="Sc=1-69"/>
</dbReference>
<dbReference type="PDBsum" id="4UG0"/>
<dbReference type="PDBsum" id="4V6X"/>
<dbReference type="PDBsum" id="5A2Q"/>
<dbReference type="PDBsum" id="5AJ0"/>
<dbReference type="PDBsum" id="5FLX"/>
<dbReference type="PDBsum" id="5LKS"/>
<dbReference type="PDBsum" id="5OA3"/>
<dbReference type="PDBsum" id="5T2C"/>
<dbReference type="PDBsum" id="5VYC"/>
<dbReference type="PDBsum" id="6FEC"/>
<dbReference type="PDBsum" id="6G18"/>
<dbReference type="PDBsum" id="6G4S"/>
<dbReference type="PDBsum" id="6G4W"/>
<dbReference type="PDBsum" id="6G51"/>
<dbReference type="PDBsum" id="6G53"/>
<dbReference type="PDBsum" id="6G5H"/>
<dbReference type="PDBsum" id="6G5I"/>
<dbReference type="PDBsum" id="6IP5"/>
<dbReference type="PDBsum" id="6IP6"/>
<dbReference type="PDBsum" id="6IP8"/>
<dbReference type="PDBsum" id="6OLE"/>
<dbReference type="PDBsum" id="6OLF"/>
<dbReference type="PDBsum" id="6OLG"/>
<dbReference type="PDBsum" id="6OLI"/>
<dbReference type="PDBsum" id="6OLZ"/>
<dbReference type="PDBsum" id="6OM0"/>
<dbReference type="PDBsum" id="6OM7"/>
<dbReference type="PDBsum" id="6QZP"/>
<dbReference type="PDBsum" id="6XA1"/>
<dbReference type="PDBsum" id="6Y0G"/>
<dbReference type="PDBsum" id="6Y2L"/>
<dbReference type="PDBsum" id="6Y57"/>
<dbReference type="PDBsum" id="6YBS"/>
<dbReference type="PDBsum" id="6Z6L"/>
<dbReference type="PDBsum" id="6Z6M"/>
<dbReference type="PDBsum" id="6Z6N"/>
<dbReference type="PDBsum" id="6ZLW"/>
<dbReference type="PDBsum" id="6ZM7"/>
<dbReference type="PDBsum" id="6ZME"/>
<dbReference type="PDBsum" id="6ZMI"/>
<dbReference type="PDBsum" id="6ZMO"/>
<dbReference type="PDBsum" id="6ZMT"/>
<dbReference type="PDBsum" id="6ZMW"/>
<dbReference type="PDBsum" id="6ZN5"/>
<dbReference type="PDBsum" id="6ZOJ"/>
<dbReference type="PDBsum" id="6ZOL"/>
<dbReference type="PDBsum" id="6ZON"/>
<dbReference type="PDBsum" id="6ZP4"/>
<dbReference type="PDBsum" id="6ZUO"/>
<dbReference type="PDBsum" id="6ZV6"/>
<dbReference type="PDBsum" id="6ZVH"/>
<dbReference type="PDBsum" id="6ZVJ"/>
<dbReference type="PDBsum" id="6ZXD"/>
<dbReference type="PDBsum" id="6ZXE"/>
<dbReference type="PDBsum" id="6ZXF"/>
<dbReference type="PDBsum" id="6ZXG"/>
<dbReference type="PDBsum" id="6ZXH"/>
<dbReference type="PDBsum" id="7A09"/>
<dbReference type="PDBsum" id="7K5I"/>
<dbReference type="PDBsum" id="7MQ8"/>
<dbReference type="PDBsum" id="7MQ9"/>
<dbReference type="PDBsum" id="7MQA"/>
<dbReference type="PDBsum" id="7QP6"/>
<dbReference type="PDBsum" id="7QP7"/>
<dbReference type="PDBsum" id="7R4X"/>
<dbReference type="PDBsum" id="7TQL"/>
<dbReference type="PDBsum" id="7WTT"/>
<dbReference type="PDBsum" id="7WTU"/>
<dbReference type="PDBsum" id="7WTV"/>
<dbReference type="PDBsum" id="7WTW"/>
<dbReference type="PDBsum" id="7WTX"/>
<dbReference type="PDBsum" id="7WTZ"/>
<dbReference type="PDBsum" id="7WU0"/>
<dbReference type="PDBsum" id="7XNX"/>
<dbReference type="PDBsum" id="7XNY"/>
<dbReference type="PDBsum" id="8G5Y"/>
<dbReference type="PDBsum" id="8G5Z"/>
<dbReference type="PDBsum" id="8G60"/>
<dbReference type="PDBsum" id="8G61"/>
<dbReference type="PDBsum" id="8G6J"/>
<dbReference type="PDBsum" id="8GLP"/>
<dbReference type="PDBsum" id="8IFD"/>
<dbReference type="PDBsum" id="8IFE"/>
<dbReference type="PDBsum" id="8JDJ"/>
<dbReference type="PDBsum" id="8JDK"/>
<dbReference type="PDBsum" id="8JDL"/>
<dbReference type="PDBsum" id="8JDM"/>
<dbReference type="PDBsum" id="8K2C"/>
<dbReference type="PDBsum" id="8OZ0"/>
<dbReference type="PDBsum" id="8PJ1"/>
<dbReference type="PDBsum" id="8PJ2"/>
<dbReference type="PDBsum" id="8PJ3"/>
<dbReference type="PDBsum" id="8PJ4"/>
<dbReference type="PDBsum" id="8PJ5"/>
<dbReference type="PDBsum" id="8PJ6"/>
<dbReference type="PDBsum" id="8PPK"/>
<dbReference type="PDBsum" id="8PPL"/>
<dbReference type="PDBsum" id="8QOI"/>
<dbReference type="PDBsum" id="8RG0"/>
<dbReference type="PDBsum" id="8T4S"/>
<dbReference type="PDBsum" id="8UKB"/>
<dbReference type="PDBsum" id="8XP2"/>
<dbReference type="PDBsum" id="8XP3"/>
<dbReference type="PDBsum" id="8XSX"/>
<dbReference type="PDBsum" id="8XSY"/>
<dbReference type="PDBsum" id="8XSZ"/>
<dbReference type="PDBsum" id="8XXL"/>
<dbReference type="PDBsum" id="8XXM"/>
<dbReference type="PDBsum" id="8XXN"/>
<dbReference type="PDBsum" id="8Y0W"/>
<dbReference type="PDBsum" id="8Y0X"/>
<dbReference type="PDBsum" id="8YOO"/>
<dbReference type="PDBsum" id="8YOP"/>
<dbReference type="PDBsum" id="8ZDB"/>
<dbReference type="PDBsum" id="8ZDC"/>
<dbReference type="PDBsum" id="8ZDD"/>
<dbReference type="PDBsum" id="9BKD"/>
<dbReference type="PDBsum" id="9BLN"/>
<dbReference type="PDBsum" id="9C3H"/>
<dbReference type="PDBsum" id="9G8M"/>
<dbReference type="PDBsum" id="9G8O"/>
<dbReference type="EMDB" id="EMD-10668"/>
<dbReference type="EMDB" id="EMD-10674"/>
<dbReference type="EMDB" id="EMD-10690"/>
<dbReference type="EMDB" id="EMD-10772"/>
<dbReference type="EMDB" id="EMD-11098"/>
<dbReference type="EMDB" id="EMD-11099"/>
<dbReference type="EMDB" id="EMD-11100"/>
<dbReference type="EMDB" id="EMD-11276"/>
<dbReference type="EMDB" id="EMD-11288"/>
<dbReference type="EMDB" id="EMD-11289"/>
<dbReference type="EMDB" id="EMD-11292"/>
<dbReference type="EMDB" id="EMD-11299"/>
<dbReference type="EMDB" id="EMD-11301"/>
<dbReference type="EMDB" id="EMD-11302"/>
<dbReference type="EMDB" id="EMD-11310"/>
<dbReference type="EMDB" id="EMD-11320"/>
<dbReference type="EMDB" id="EMD-11322"/>
<dbReference type="EMDB" id="EMD-11325"/>
<dbReference type="EMDB" id="EMD-11335"/>
<dbReference type="EMDB" id="EMD-11440"/>
<dbReference type="EMDB" id="EMD-11441"/>
<dbReference type="EMDB" id="EMD-11456"/>
<dbReference type="EMDB" id="EMD-11458"/>
<dbReference type="EMDB" id="EMD-11517"/>
<dbReference type="EMDB" id="EMD-11518"/>
<dbReference type="EMDB" id="EMD-11519"/>
<dbReference type="EMDB" id="EMD-11520"/>
<dbReference type="EMDB" id="EMD-11521"/>
<dbReference type="EMDB" id="EMD-11602"/>
<dbReference type="EMDB" id="EMD-14113"/>
<dbReference type="EMDB" id="EMD-14114"/>
<dbReference type="EMDB" id="EMD-14317"/>
<dbReference type="EMDB" id="EMD-17297"/>
<dbReference type="EMDB" id="EMD-17696"/>
<dbReference type="EMDB" id="EMD-17697"/>
<dbReference type="EMDB" id="EMD-17698"/>
<dbReference type="EMDB" id="EMD-17699"/>
<dbReference type="EMDB" id="EMD-17700"/>
<dbReference type="EMDB" id="EMD-17701"/>
<dbReference type="EMDB" id="EMD-17804"/>
<dbReference type="EMDB" id="EMD-17805"/>
<dbReference type="EMDB" id="EMD-18539"/>
<dbReference type="EMDB" id="EMD-19128"/>
<dbReference type="EMDB" id="EMD-22681"/>
<dbReference type="EMDB" id="EMD-23936"/>
<dbReference type="EMDB" id="EMD-23937"/>
<dbReference type="EMDB" id="EMD-23938"/>
<dbReference type="EMDB" id="EMD-26067"/>
<dbReference type="EMDB" id="EMD-29757"/>
<dbReference type="EMDB" id="EMD-29758"/>
<dbReference type="EMDB" id="EMD-29759"/>
<dbReference type="EMDB" id="EMD-29760"/>
<dbReference type="EMDB" id="EMD-29771"/>
<dbReference type="EMDB" id="EMD-32800"/>
<dbReference type="EMDB" id="EMD-32801"/>
<dbReference type="EMDB" id="EMD-32802"/>
<dbReference type="EMDB" id="EMD-32803"/>
<dbReference type="EMDB" id="EMD-32804"/>
<dbReference type="EMDB" id="EMD-32806"/>
<dbReference type="EMDB" id="EMD-32807"/>
<dbReference type="EMDB" id="EMD-33329"/>
<dbReference type="EMDB" id="EMD-33330"/>
<dbReference type="EMDB" id="EMD-35413"/>
<dbReference type="EMDB" id="EMD-35414"/>
<dbReference type="EMDB" id="EMD-36178"/>
<dbReference type="EMDB" id="EMD-36179"/>
<dbReference type="EMDB" id="EMD-36180"/>
<dbReference type="EMDB" id="EMD-36181"/>
<dbReference type="EMDB" id="EMD-36838"/>
<dbReference type="EMDB" id="EMD-3770"/>
<dbReference type="EMDB" id="EMD-38548"/>
<dbReference type="EMDB" id="EMD-38549"/>
<dbReference type="EMDB" id="EMD-38629"/>
<dbReference type="EMDB" id="EMD-38630"/>
<dbReference type="EMDB" id="EMD-38631"/>
<dbReference type="EMDB" id="EMD-38752"/>
<dbReference type="EMDB" id="EMD-38753"/>
<dbReference type="EMDB" id="EMD-38754"/>
<dbReference type="EMDB" id="EMD-3883"/>
<dbReference type="EMDB" id="EMD-39455"/>
<dbReference type="EMDB" id="EMD-39456"/>
<dbReference type="EMDB" id="EMD-39956"/>
<dbReference type="EMDB" id="EMD-39957"/>
<dbReference type="EMDB" id="EMD-39958"/>
<dbReference type="EMDB" id="EMD-40205"/>
<dbReference type="EMDB" id="EMD-4070"/>
<dbReference type="EMDB" id="EMD-41039"/>
<dbReference type="EMDB" id="EMD-42351"/>
<dbReference type="EMDB" id="EMD-4242"/>
<dbReference type="EMDB" id="EMD-4337"/>
<dbReference type="EMDB" id="EMD-4348"/>
<dbReference type="EMDB" id="EMD-4349"/>
<dbReference type="EMDB" id="EMD-4350"/>
<dbReference type="EMDB" id="EMD-4351"/>
<dbReference type="EMDB" id="EMD-4352"/>
<dbReference type="EMDB" id="EMD-4353"/>
<dbReference type="EMDB" id="EMD-44641"/>
<dbReference type="EMDB" id="EMD-44671"/>
<dbReference type="EMDB" id="EMD-45170"/>
<dbReference type="EMDB" id="EMD-51132"/>
<dbReference type="EMDB" id="EMD-51134"/>
<dbReference type="EMDB" id="EMD-9701"/>
<dbReference type="EMDB" id="EMD-9702"/>
<dbReference type="EMDB" id="EMD-9703"/>
<dbReference type="SMR" id="P62857"/>
<dbReference type="BioGRID" id="112148">
    <property type="interactions" value="315"/>
</dbReference>
<dbReference type="ComplexPortal" id="CPX-5223">
    <property type="entry name" value="40S cytosolic small ribosomal subunit"/>
</dbReference>
<dbReference type="CORUM" id="P62857"/>
<dbReference type="FunCoup" id="P62857">
    <property type="interactions" value="1551"/>
</dbReference>
<dbReference type="IntAct" id="P62857">
    <property type="interactions" value="113"/>
</dbReference>
<dbReference type="MINT" id="P62857"/>
<dbReference type="STRING" id="9606.ENSP00000472469"/>
<dbReference type="DrugBank" id="DB11638">
    <property type="generic name" value="Artenimol"/>
</dbReference>
<dbReference type="GlyGen" id="P62857">
    <property type="glycosylation" value="1 site, 1 O-linked glycan (1 site)"/>
</dbReference>
<dbReference type="iPTMnet" id="P62857"/>
<dbReference type="MetOSite" id="P62857"/>
<dbReference type="PhosphoSitePlus" id="P62857"/>
<dbReference type="SwissPalm" id="P62857"/>
<dbReference type="BioMuta" id="RPS28"/>
<dbReference type="DMDM" id="51338652"/>
<dbReference type="jPOST" id="P62857"/>
<dbReference type="MassIVE" id="P62857"/>
<dbReference type="PaxDb" id="9606-ENSP00000472469"/>
<dbReference type="PeptideAtlas" id="P62857"/>
<dbReference type="ProteomicsDB" id="57439"/>
<dbReference type="Pumba" id="P62857"/>
<dbReference type="TopDownProteomics" id="P62857"/>
<dbReference type="Antibodypedia" id="24844">
    <property type="antibodies" value="83 antibodies from 22 providers"/>
</dbReference>
<dbReference type="DNASU" id="6234"/>
<dbReference type="Ensembl" id="ENST00000600659.3">
    <property type="protein sequence ID" value="ENSP00000472469.1"/>
    <property type="gene ID" value="ENSG00000233927.5"/>
</dbReference>
<dbReference type="GeneID" id="6234"/>
<dbReference type="KEGG" id="hsa:6234"/>
<dbReference type="MANE-Select" id="ENST00000600659.3">
    <property type="protein sequence ID" value="ENSP00000472469.1"/>
    <property type="RefSeq nucleotide sequence ID" value="NM_001031.5"/>
    <property type="RefSeq protein sequence ID" value="NP_001022.1"/>
</dbReference>
<dbReference type="UCSC" id="uc002mjn.4">
    <property type="organism name" value="human"/>
</dbReference>
<dbReference type="AGR" id="HGNC:10418"/>
<dbReference type="CTD" id="6234"/>
<dbReference type="DisGeNET" id="6234"/>
<dbReference type="GeneCards" id="RPS28"/>
<dbReference type="GeneReviews" id="RPS28"/>
<dbReference type="HGNC" id="HGNC:10418">
    <property type="gene designation" value="RPS28"/>
</dbReference>
<dbReference type="HPA" id="ENSG00000233927">
    <property type="expression patterns" value="Low tissue specificity"/>
</dbReference>
<dbReference type="MalaCards" id="RPS28"/>
<dbReference type="MIM" id="603685">
    <property type="type" value="gene"/>
</dbReference>
<dbReference type="MIM" id="606164">
    <property type="type" value="phenotype"/>
</dbReference>
<dbReference type="neXtProt" id="NX_P62857"/>
<dbReference type="OpenTargets" id="ENSG00000233927"/>
<dbReference type="Orphanet" id="124">
    <property type="disease" value="Diamond-Blackfan anemia"/>
</dbReference>
<dbReference type="PharmGKB" id="PA34825"/>
<dbReference type="VEuPathDB" id="HostDB:ENSG00000233927"/>
<dbReference type="eggNOG" id="KOG3502">
    <property type="taxonomic scope" value="Eukaryota"/>
</dbReference>
<dbReference type="GeneTree" id="ENSGT00910000144227"/>
<dbReference type="HOGENOM" id="CLU_178987_1_0_1"/>
<dbReference type="InParanoid" id="P62857"/>
<dbReference type="OMA" id="NTGMHGE"/>
<dbReference type="OrthoDB" id="10258930at2759"/>
<dbReference type="PAN-GO" id="P62857">
    <property type="GO annotations" value="4 GO annotations based on evolutionary models"/>
</dbReference>
<dbReference type="PhylomeDB" id="P62857"/>
<dbReference type="TreeFam" id="TF300136"/>
<dbReference type="PathwayCommons" id="P62857"/>
<dbReference type="Reactome" id="R-HSA-156827">
    <property type="pathway name" value="L13a-mediated translational silencing of Ceruloplasmin expression"/>
</dbReference>
<dbReference type="Reactome" id="R-HSA-156902">
    <property type="pathway name" value="Peptide chain elongation"/>
</dbReference>
<dbReference type="Reactome" id="R-HSA-1799339">
    <property type="pathway name" value="SRP-dependent cotranslational protein targeting to membrane"/>
</dbReference>
<dbReference type="Reactome" id="R-HSA-192823">
    <property type="pathway name" value="Viral mRNA Translation"/>
</dbReference>
<dbReference type="Reactome" id="R-HSA-2408557">
    <property type="pathway name" value="Selenocysteine synthesis"/>
</dbReference>
<dbReference type="Reactome" id="R-HSA-6791226">
    <property type="pathway name" value="Major pathway of rRNA processing in the nucleolus and cytosol"/>
</dbReference>
<dbReference type="Reactome" id="R-HSA-72649">
    <property type="pathway name" value="Translation initiation complex formation"/>
</dbReference>
<dbReference type="Reactome" id="R-HSA-72689">
    <property type="pathway name" value="Formation of a pool of free 40S subunits"/>
</dbReference>
<dbReference type="Reactome" id="R-HSA-72695">
    <property type="pathway name" value="Formation of the ternary complex, and subsequently, the 43S complex"/>
</dbReference>
<dbReference type="Reactome" id="R-HSA-72702">
    <property type="pathway name" value="Ribosomal scanning and start codon recognition"/>
</dbReference>
<dbReference type="Reactome" id="R-HSA-72706">
    <property type="pathway name" value="GTP hydrolysis and joining of the 60S ribosomal subunit"/>
</dbReference>
<dbReference type="Reactome" id="R-HSA-72764">
    <property type="pathway name" value="Eukaryotic Translation Termination"/>
</dbReference>
<dbReference type="Reactome" id="R-HSA-9010553">
    <property type="pathway name" value="Regulation of expression of SLITs and ROBOs"/>
</dbReference>
<dbReference type="Reactome" id="R-HSA-9633012">
    <property type="pathway name" value="Response of EIF2AK4 (GCN2) to amino acid deficiency"/>
</dbReference>
<dbReference type="Reactome" id="R-HSA-9735869">
    <property type="pathway name" value="SARS-CoV-1 modulates host translation machinery"/>
</dbReference>
<dbReference type="Reactome" id="R-HSA-9754678">
    <property type="pathway name" value="SARS-CoV-2 modulates host translation machinery"/>
</dbReference>
<dbReference type="Reactome" id="R-HSA-975956">
    <property type="pathway name" value="Nonsense Mediated Decay (NMD) independent of the Exon Junction Complex (EJC)"/>
</dbReference>
<dbReference type="Reactome" id="R-HSA-975957">
    <property type="pathway name" value="Nonsense Mediated Decay (NMD) enhanced by the Exon Junction Complex (EJC)"/>
</dbReference>
<dbReference type="SignaLink" id="P62857"/>
<dbReference type="SIGNOR" id="P62857"/>
<dbReference type="BioGRID-ORCS" id="6234">
    <property type="hits" value="796 hits in 1072 CRISPR screens"/>
</dbReference>
<dbReference type="CD-CODE" id="91857CE7">
    <property type="entry name" value="Nucleolus"/>
</dbReference>
<dbReference type="ChiTaRS" id="RPS28">
    <property type="organism name" value="human"/>
</dbReference>
<dbReference type="EvolutionaryTrace" id="P62857"/>
<dbReference type="GeneWiki" id="RPS28"/>
<dbReference type="GenomeRNAi" id="6234"/>
<dbReference type="Pharos" id="P62857">
    <property type="development level" value="Tbio"/>
</dbReference>
<dbReference type="PRO" id="PR:P62857"/>
<dbReference type="Proteomes" id="UP000005640">
    <property type="component" value="Chromosome 19"/>
</dbReference>
<dbReference type="RNAct" id="P62857">
    <property type="molecule type" value="protein"/>
</dbReference>
<dbReference type="Bgee" id="ENSG00000233927">
    <property type="expression patterns" value="Expressed in lower esophagus mucosa and 172 other cell types or tissues"/>
</dbReference>
<dbReference type="ExpressionAtlas" id="P62857">
    <property type="expression patterns" value="baseline and differential"/>
</dbReference>
<dbReference type="GO" id="GO:0005737">
    <property type="term" value="C:cytoplasm"/>
    <property type="evidence" value="ECO:0000303"/>
    <property type="project" value="ComplexPortal"/>
</dbReference>
<dbReference type="GO" id="GO:0098556">
    <property type="term" value="C:cytoplasmic side of rough endoplasmic reticulum membrane"/>
    <property type="evidence" value="ECO:0000250"/>
    <property type="project" value="UniProtKB"/>
</dbReference>
<dbReference type="GO" id="GO:0005829">
    <property type="term" value="C:cytosol"/>
    <property type="evidence" value="ECO:0000304"/>
    <property type="project" value="Reactome"/>
</dbReference>
<dbReference type="GO" id="GO:0022627">
    <property type="term" value="C:cytosolic small ribosomal subunit"/>
    <property type="evidence" value="ECO:0000314"/>
    <property type="project" value="UniProtKB"/>
</dbReference>
<dbReference type="GO" id="GO:0070062">
    <property type="term" value="C:extracellular exosome"/>
    <property type="evidence" value="ECO:0007005"/>
    <property type="project" value="UniProtKB"/>
</dbReference>
<dbReference type="GO" id="GO:0005730">
    <property type="term" value="C:nucleolus"/>
    <property type="evidence" value="ECO:0007669"/>
    <property type="project" value="UniProtKB-SubCell"/>
</dbReference>
<dbReference type="GO" id="GO:0005654">
    <property type="term" value="C:nucleoplasm"/>
    <property type="evidence" value="ECO:0000304"/>
    <property type="project" value="Reactome"/>
</dbReference>
<dbReference type="GO" id="GO:0005840">
    <property type="term" value="C:ribosome"/>
    <property type="evidence" value="ECO:0000314"/>
    <property type="project" value="UniProtKB"/>
</dbReference>
<dbReference type="GO" id="GO:0015935">
    <property type="term" value="C:small ribosomal subunit"/>
    <property type="evidence" value="ECO:0007005"/>
    <property type="project" value="UniProtKB"/>
</dbReference>
<dbReference type="GO" id="GO:0032040">
    <property type="term" value="C:small-subunit processome"/>
    <property type="evidence" value="ECO:0000314"/>
    <property type="project" value="UniProtKB"/>
</dbReference>
<dbReference type="GO" id="GO:0045202">
    <property type="term" value="C:synapse"/>
    <property type="evidence" value="ECO:0007669"/>
    <property type="project" value="Ensembl"/>
</dbReference>
<dbReference type="GO" id="GO:0003723">
    <property type="term" value="F:RNA binding"/>
    <property type="evidence" value="ECO:0007005"/>
    <property type="project" value="UniProtKB"/>
</dbReference>
<dbReference type="GO" id="GO:0003735">
    <property type="term" value="F:structural constituent of ribosome"/>
    <property type="evidence" value="ECO:0000314"/>
    <property type="project" value="FlyBase"/>
</dbReference>
<dbReference type="GO" id="GO:0002181">
    <property type="term" value="P:cytoplasmic translation"/>
    <property type="evidence" value="ECO:0000314"/>
    <property type="project" value="UniProtKB"/>
</dbReference>
<dbReference type="GO" id="GO:0030490">
    <property type="term" value="P:maturation of SSU-rRNA"/>
    <property type="evidence" value="ECO:0000318"/>
    <property type="project" value="GO_Central"/>
</dbReference>
<dbReference type="GO" id="GO:0000028">
    <property type="term" value="P:ribosomal small subunit assembly"/>
    <property type="evidence" value="ECO:0000318"/>
    <property type="project" value="GO_Central"/>
</dbReference>
<dbReference type="GO" id="GO:0042274">
    <property type="term" value="P:ribosomal small subunit biogenesis"/>
    <property type="evidence" value="ECO:0000314"/>
    <property type="project" value="UniProtKB"/>
</dbReference>
<dbReference type="GO" id="GO:0042254">
    <property type="term" value="P:ribosome biogenesis"/>
    <property type="evidence" value="ECO:0000315"/>
    <property type="project" value="UniProtKB"/>
</dbReference>
<dbReference type="GO" id="GO:0006364">
    <property type="term" value="P:rRNA processing"/>
    <property type="evidence" value="ECO:0000315"/>
    <property type="project" value="UniProtKB"/>
</dbReference>
<dbReference type="GO" id="GO:0006412">
    <property type="term" value="P:translation"/>
    <property type="evidence" value="ECO:0000305"/>
    <property type="project" value="UniProtKB"/>
</dbReference>
<dbReference type="CDD" id="cd04457">
    <property type="entry name" value="S1_S28E"/>
    <property type="match status" value="1"/>
</dbReference>
<dbReference type="FunFam" id="2.40.50.140:FF:000025">
    <property type="entry name" value="40S ribosomal protein S28"/>
    <property type="match status" value="1"/>
</dbReference>
<dbReference type="Gene3D" id="2.40.50.140">
    <property type="entry name" value="Nucleic acid-binding proteins"/>
    <property type="match status" value="1"/>
</dbReference>
<dbReference type="HAMAP" id="MF_00292">
    <property type="entry name" value="Ribosomal_eS28"/>
    <property type="match status" value="1"/>
</dbReference>
<dbReference type="InterPro" id="IPR012340">
    <property type="entry name" value="NA-bd_OB-fold"/>
</dbReference>
<dbReference type="InterPro" id="IPR000289">
    <property type="entry name" value="Ribosomal_eS28"/>
</dbReference>
<dbReference type="InterPro" id="IPR028626">
    <property type="entry name" value="Ribosomal_eS28_CS"/>
</dbReference>
<dbReference type="PANTHER" id="PTHR10769">
    <property type="entry name" value="40S RIBOSOMAL PROTEIN S28"/>
    <property type="match status" value="1"/>
</dbReference>
<dbReference type="PANTHER" id="PTHR10769:SF3">
    <property type="entry name" value="SMALL RIBOSOMAL SUBUNIT PROTEIN ES28"/>
    <property type="match status" value="1"/>
</dbReference>
<dbReference type="Pfam" id="PF01200">
    <property type="entry name" value="Ribosomal_S28e"/>
    <property type="match status" value="1"/>
</dbReference>
<dbReference type="SUPFAM" id="SSF50249">
    <property type="entry name" value="Nucleic acid-binding proteins"/>
    <property type="match status" value="1"/>
</dbReference>
<dbReference type="PROSITE" id="PS00961">
    <property type="entry name" value="RIBOSOMAL_S28E"/>
    <property type="match status" value="1"/>
</dbReference>
<proteinExistence type="evidence at protein level"/>
<gene>
    <name evidence="12" type="primary">RPS28</name>
</gene>
<accession>P62857</accession>
<accession>P25112</accession>